<reference key="1">
    <citation type="journal article" date="2007" name="Proc. Natl. Acad. Sci. U.S.A.">
        <title>Genome plasticity of BCG and impact on vaccine efficacy.</title>
        <authorList>
            <person name="Brosch R."/>
            <person name="Gordon S.V."/>
            <person name="Garnier T."/>
            <person name="Eiglmeier K."/>
            <person name="Frigui W."/>
            <person name="Valenti P."/>
            <person name="Dos Santos S."/>
            <person name="Duthoy S."/>
            <person name="Lacroix C."/>
            <person name="Garcia-Pelayo C."/>
            <person name="Inwald J.K."/>
            <person name="Golby P."/>
            <person name="Garcia J.N."/>
            <person name="Hewinson R.G."/>
            <person name="Behr M.A."/>
            <person name="Quail M.A."/>
            <person name="Churcher C."/>
            <person name="Barrell B.G."/>
            <person name="Parkhill J."/>
            <person name="Cole S.T."/>
        </authorList>
    </citation>
    <scope>NUCLEOTIDE SEQUENCE [LARGE SCALE GENOMIC DNA]</scope>
    <source>
        <strain>BCG / Pasteur 1173P2</strain>
    </source>
</reference>
<sequence length="691" mass="75289">MSSPDADQTAPEVLRQWQALAEEVREHQFRYYVRDAPIISDAEFDELLRRLEALEEQHPELRTPDSPTQLVGGAGFATDFEPVDHLERMLSLDNAFTADELAAWAGRIHAEVGDAAHYLCELKIDGVALSLVYREGRLTRASTRGDGRTGEDVTLNARTIADVPERLTPGDDYPVPEVLEVRGEVFFRLDDFQALNASLVEEGKAPFANPRNSAAGSLRQKDPAVTARRRLRMICHGLGHVEGFRPATLHQAYLALRAWGLPVSEHTTLATDLAGVRERIDYWGEHRHEVDHEIDGVVVKVDEVALQRRLGSTSRAPRWAIAYKYPPEEAQTKLLDIRVNVGRTGRITPFAFMTPVKVAGSTVGQATLHNASEIKRKGVLIGDTVVIRKAGDVIPEVLGPVVELRDGSEREFIMPTTCPECGSPLAPEKEGDADIRCPNARGCPGQLRERVFHVASRNGLDIEVLGYEAGVALLQAKVIADEGELFALTERDLLRTDLFRTKAGELSANGKRLLVNLDKAKAAPLWRVLVALSIRHVGPTAARALATEFGSLDAIAAASTDQLAAVEGVGPTIAAAVTEWFAVDWHREIVDKWRAAGVRMVDERDESVPRTLAGLTIVVTGSLTGFSRDDAKEAIVARGGKAAGSVSKKTNYVVAGDSPGSKYDKAVELGVPILDEDGFRRLLADGPASRT</sequence>
<accession>A1KN09</accession>
<gene>
    <name evidence="1" type="primary">ligA</name>
    <name type="ordered locus">BCG_3036c</name>
</gene>
<protein>
    <recommendedName>
        <fullName evidence="1">DNA ligase</fullName>
        <ecNumber evidence="1">6.5.1.2</ecNumber>
    </recommendedName>
    <alternativeName>
        <fullName evidence="1">Polydeoxyribonucleotide synthase [NAD(+)]</fullName>
    </alternativeName>
</protein>
<feature type="chain" id="PRO_0000313311" description="DNA ligase">
    <location>
        <begin position="1"/>
        <end position="691"/>
    </location>
</feature>
<feature type="domain" description="BRCT" evidence="1">
    <location>
        <begin position="607"/>
        <end position="691"/>
    </location>
</feature>
<feature type="active site" description="N6-AMP-lysine intermediate" evidence="1">
    <location>
        <position position="123"/>
    </location>
</feature>
<feature type="binding site" evidence="1">
    <location>
        <begin position="41"/>
        <end position="45"/>
    </location>
    <ligand>
        <name>NAD(+)</name>
        <dbReference type="ChEBI" id="CHEBI:57540"/>
    </ligand>
</feature>
<feature type="binding site" evidence="1">
    <location>
        <begin position="91"/>
        <end position="92"/>
    </location>
    <ligand>
        <name>NAD(+)</name>
        <dbReference type="ChEBI" id="CHEBI:57540"/>
    </ligand>
</feature>
<feature type="binding site" evidence="1">
    <location>
        <position position="121"/>
    </location>
    <ligand>
        <name>NAD(+)</name>
        <dbReference type="ChEBI" id="CHEBI:57540"/>
    </ligand>
</feature>
<feature type="binding site" evidence="1">
    <location>
        <position position="144"/>
    </location>
    <ligand>
        <name>NAD(+)</name>
        <dbReference type="ChEBI" id="CHEBI:57540"/>
    </ligand>
</feature>
<feature type="binding site" evidence="1">
    <location>
        <position position="184"/>
    </location>
    <ligand>
        <name>NAD(+)</name>
        <dbReference type="ChEBI" id="CHEBI:57540"/>
    </ligand>
</feature>
<feature type="binding site" evidence="1">
    <location>
        <position position="300"/>
    </location>
    <ligand>
        <name>NAD(+)</name>
        <dbReference type="ChEBI" id="CHEBI:57540"/>
    </ligand>
</feature>
<feature type="binding site" evidence="1">
    <location>
        <position position="324"/>
    </location>
    <ligand>
        <name>NAD(+)</name>
        <dbReference type="ChEBI" id="CHEBI:57540"/>
    </ligand>
</feature>
<feature type="binding site" evidence="1">
    <location>
        <position position="418"/>
    </location>
    <ligand>
        <name>Zn(2+)</name>
        <dbReference type="ChEBI" id="CHEBI:29105"/>
    </ligand>
</feature>
<feature type="binding site" evidence="1">
    <location>
        <position position="421"/>
    </location>
    <ligand>
        <name>Zn(2+)</name>
        <dbReference type="ChEBI" id="CHEBI:29105"/>
    </ligand>
</feature>
<feature type="binding site" evidence="1">
    <location>
        <position position="437"/>
    </location>
    <ligand>
        <name>Zn(2+)</name>
        <dbReference type="ChEBI" id="CHEBI:29105"/>
    </ligand>
</feature>
<feature type="binding site" evidence="1">
    <location>
        <position position="443"/>
    </location>
    <ligand>
        <name>Zn(2+)</name>
        <dbReference type="ChEBI" id="CHEBI:29105"/>
    </ligand>
</feature>
<organism>
    <name type="scientific">Mycobacterium bovis (strain BCG / Pasteur 1173P2)</name>
    <dbReference type="NCBI Taxonomy" id="410289"/>
    <lineage>
        <taxon>Bacteria</taxon>
        <taxon>Bacillati</taxon>
        <taxon>Actinomycetota</taxon>
        <taxon>Actinomycetes</taxon>
        <taxon>Mycobacteriales</taxon>
        <taxon>Mycobacteriaceae</taxon>
        <taxon>Mycobacterium</taxon>
        <taxon>Mycobacterium tuberculosis complex</taxon>
    </lineage>
</organism>
<name>DNLJ_MYCBP</name>
<keyword id="KW-0227">DNA damage</keyword>
<keyword id="KW-0234">DNA repair</keyword>
<keyword id="KW-0235">DNA replication</keyword>
<keyword id="KW-0436">Ligase</keyword>
<keyword id="KW-0460">Magnesium</keyword>
<keyword id="KW-0464">Manganese</keyword>
<keyword id="KW-0479">Metal-binding</keyword>
<keyword id="KW-0520">NAD</keyword>
<keyword id="KW-0862">Zinc</keyword>
<comment type="function">
    <text evidence="1">DNA ligase that catalyzes the formation of phosphodiester linkages between 5'-phosphoryl and 3'-hydroxyl groups in double-stranded DNA using NAD as a coenzyme and as the energy source for the reaction. It is essential for DNA replication and repair of damaged DNA.</text>
</comment>
<comment type="catalytic activity">
    <reaction evidence="1">
        <text>NAD(+) + (deoxyribonucleotide)n-3'-hydroxyl + 5'-phospho-(deoxyribonucleotide)m = (deoxyribonucleotide)n+m + AMP + beta-nicotinamide D-nucleotide.</text>
        <dbReference type="EC" id="6.5.1.2"/>
    </reaction>
</comment>
<comment type="cofactor">
    <cofactor evidence="1">
        <name>Mg(2+)</name>
        <dbReference type="ChEBI" id="CHEBI:18420"/>
    </cofactor>
    <cofactor evidence="1">
        <name>Mn(2+)</name>
        <dbReference type="ChEBI" id="CHEBI:29035"/>
    </cofactor>
</comment>
<comment type="similarity">
    <text evidence="1">Belongs to the NAD-dependent DNA ligase family. LigA subfamily.</text>
</comment>
<evidence type="ECO:0000255" key="1">
    <source>
        <dbReference type="HAMAP-Rule" id="MF_01588"/>
    </source>
</evidence>
<proteinExistence type="inferred from homology"/>
<dbReference type="EC" id="6.5.1.2" evidence="1"/>
<dbReference type="EMBL" id="AM408590">
    <property type="protein sequence ID" value="CAL73025.1"/>
    <property type="molecule type" value="Genomic_DNA"/>
</dbReference>
<dbReference type="RefSeq" id="WP_003415263.1">
    <property type="nucleotide sequence ID" value="NC_008769.1"/>
</dbReference>
<dbReference type="SMR" id="A1KN09"/>
<dbReference type="KEGG" id="mbb:BCG_3036c"/>
<dbReference type="HOGENOM" id="CLU_007764_2_0_11"/>
<dbReference type="Proteomes" id="UP000001472">
    <property type="component" value="Chromosome"/>
</dbReference>
<dbReference type="GO" id="GO:0005829">
    <property type="term" value="C:cytosol"/>
    <property type="evidence" value="ECO:0007669"/>
    <property type="project" value="TreeGrafter"/>
</dbReference>
<dbReference type="GO" id="GO:0003911">
    <property type="term" value="F:DNA ligase (NAD+) activity"/>
    <property type="evidence" value="ECO:0007669"/>
    <property type="project" value="UniProtKB-UniRule"/>
</dbReference>
<dbReference type="GO" id="GO:0046872">
    <property type="term" value="F:metal ion binding"/>
    <property type="evidence" value="ECO:0007669"/>
    <property type="project" value="UniProtKB-KW"/>
</dbReference>
<dbReference type="GO" id="GO:0006281">
    <property type="term" value="P:DNA repair"/>
    <property type="evidence" value="ECO:0007669"/>
    <property type="project" value="UniProtKB-KW"/>
</dbReference>
<dbReference type="GO" id="GO:0006260">
    <property type="term" value="P:DNA replication"/>
    <property type="evidence" value="ECO:0007669"/>
    <property type="project" value="UniProtKB-KW"/>
</dbReference>
<dbReference type="CDD" id="cd17748">
    <property type="entry name" value="BRCT_DNA_ligase_like"/>
    <property type="match status" value="1"/>
</dbReference>
<dbReference type="CDD" id="cd00114">
    <property type="entry name" value="LIGANc"/>
    <property type="match status" value="1"/>
</dbReference>
<dbReference type="FunFam" id="1.10.150.20:FF:000006">
    <property type="entry name" value="DNA ligase"/>
    <property type="match status" value="1"/>
</dbReference>
<dbReference type="FunFam" id="1.10.150.20:FF:000100">
    <property type="entry name" value="DNA ligase"/>
    <property type="match status" value="1"/>
</dbReference>
<dbReference type="FunFam" id="1.10.287.610:FF:000002">
    <property type="entry name" value="DNA ligase"/>
    <property type="match status" value="1"/>
</dbReference>
<dbReference type="FunFam" id="2.40.50.140:FF:000012">
    <property type="entry name" value="DNA ligase"/>
    <property type="match status" value="1"/>
</dbReference>
<dbReference type="FunFam" id="3.30.470.30:FF:000001">
    <property type="entry name" value="DNA ligase"/>
    <property type="match status" value="1"/>
</dbReference>
<dbReference type="FunFam" id="3.40.50.10190:FF:000054">
    <property type="entry name" value="DNA ligase"/>
    <property type="match status" value="1"/>
</dbReference>
<dbReference type="Gene3D" id="6.20.10.30">
    <property type="match status" value="1"/>
</dbReference>
<dbReference type="Gene3D" id="1.10.150.20">
    <property type="entry name" value="5' to 3' exonuclease, C-terminal subdomain"/>
    <property type="match status" value="2"/>
</dbReference>
<dbReference type="Gene3D" id="3.40.50.10190">
    <property type="entry name" value="BRCT domain"/>
    <property type="match status" value="1"/>
</dbReference>
<dbReference type="Gene3D" id="3.30.470.30">
    <property type="entry name" value="DNA ligase/mRNA capping enzyme"/>
    <property type="match status" value="1"/>
</dbReference>
<dbReference type="Gene3D" id="1.10.287.610">
    <property type="entry name" value="Helix hairpin bin"/>
    <property type="match status" value="1"/>
</dbReference>
<dbReference type="Gene3D" id="2.40.50.140">
    <property type="entry name" value="Nucleic acid-binding proteins"/>
    <property type="match status" value="1"/>
</dbReference>
<dbReference type="HAMAP" id="MF_01588">
    <property type="entry name" value="DNA_ligase_A"/>
    <property type="match status" value="1"/>
</dbReference>
<dbReference type="InterPro" id="IPR001357">
    <property type="entry name" value="BRCT_dom"/>
</dbReference>
<dbReference type="InterPro" id="IPR036420">
    <property type="entry name" value="BRCT_dom_sf"/>
</dbReference>
<dbReference type="InterPro" id="IPR041663">
    <property type="entry name" value="DisA/LigA_HHH"/>
</dbReference>
<dbReference type="InterPro" id="IPR001679">
    <property type="entry name" value="DNA_ligase"/>
</dbReference>
<dbReference type="InterPro" id="IPR018239">
    <property type="entry name" value="DNA_ligase_AS"/>
</dbReference>
<dbReference type="InterPro" id="IPR033136">
    <property type="entry name" value="DNA_ligase_CS"/>
</dbReference>
<dbReference type="InterPro" id="IPR013839">
    <property type="entry name" value="DNAligase_adenylation"/>
</dbReference>
<dbReference type="InterPro" id="IPR013840">
    <property type="entry name" value="DNAligase_N"/>
</dbReference>
<dbReference type="InterPro" id="IPR012340">
    <property type="entry name" value="NA-bd_OB-fold"/>
</dbReference>
<dbReference type="InterPro" id="IPR004150">
    <property type="entry name" value="NAD_DNA_ligase_OB"/>
</dbReference>
<dbReference type="InterPro" id="IPR010994">
    <property type="entry name" value="RuvA_2-like"/>
</dbReference>
<dbReference type="InterPro" id="IPR004149">
    <property type="entry name" value="Znf_DNAligase_C4"/>
</dbReference>
<dbReference type="NCBIfam" id="TIGR00575">
    <property type="entry name" value="dnlj"/>
    <property type="match status" value="1"/>
</dbReference>
<dbReference type="NCBIfam" id="NF005932">
    <property type="entry name" value="PRK07956.1"/>
    <property type="match status" value="1"/>
</dbReference>
<dbReference type="PANTHER" id="PTHR23389">
    <property type="entry name" value="CHROMOSOME TRANSMISSION FIDELITY FACTOR 18"/>
    <property type="match status" value="1"/>
</dbReference>
<dbReference type="PANTHER" id="PTHR23389:SF9">
    <property type="entry name" value="DNA LIGASE"/>
    <property type="match status" value="1"/>
</dbReference>
<dbReference type="Pfam" id="PF00533">
    <property type="entry name" value="BRCT"/>
    <property type="match status" value="1"/>
</dbReference>
<dbReference type="Pfam" id="PF01653">
    <property type="entry name" value="DNA_ligase_aden"/>
    <property type="match status" value="1"/>
</dbReference>
<dbReference type="Pfam" id="PF03120">
    <property type="entry name" value="DNA_ligase_OB"/>
    <property type="match status" value="1"/>
</dbReference>
<dbReference type="Pfam" id="PF03119">
    <property type="entry name" value="DNA_ligase_ZBD"/>
    <property type="match status" value="1"/>
</dbReference>
<dbReference type="Pfam" id="PF12826">
    <property type="entry name" value="HHH_2"/>
    <property type="match status" value="1"/>
</dbReference>
<dbReference type="Pfam" id="PF22745">
    <property type="entry name" value="Nlig-Ia"/>
    <property type="match status" value="1"/>
</dbReference>
<dbReference type="PIRSF" id="PIRSF001604">
    <property type="entry name" value="LigA"/>
    <property type="match status" value="1"/>
</dbReference>
<dbReference type="SMART" id="SM00292">
    <property type="entry name" value="BRCT"/>
    <property type="match status" value="1"/>
</dbReference>
<dbReference type="SMART" id="SM00532">
    <property type="entry name" value="LIGANc"/>
    <property type="match status" value="1"/>
</dbReference>
<dbReference type="SUPFAM" id="SSF52113">
    <property type="entry name" value="BRCT domain"/>
    <property type="match status" value="1"/>
</dbReference>
<dbReference type="SUPFAM" id="SSF56091">
    <property type="entry name" value="DNA ligase/mRNA capping enzyme, catalytic domain"/>
    <property type="match status" value="1"/>
</dbReference>
<dbReference type="SUPFAM" id="SSF50249">
    <property type="entry name" value="Nucleic acid-binding proteins"/>
    <property type="match status" value="1"/>
</dbReference>
<dbReference type="SUPFAM" id="SSF47781">
    <property type="entry name" value="RuvA domain 2-like"/>
    <property type="match status" value="1"/>
</dbReference>
<dbReference type="PROSITE" id="PS50172">
    <property type="entry name" value="BRCT"/>
    <property type="match status" value="1"/>
</dbReference>
<dbReference type="PROSITE" id="PS01055">
    <property type="entry name" value="DNA_LIGASE_N1"/>
    <property type="match status" value="1"/>
</dbReference>
<dbReference type="PROSITE" id="PS01056">
    <property type="entry name" value="DNA_LIGASE_N2"/>
    <property type="match status" value="1"/>
</dbReference>